<name>DESII_STRVZ</name>
<comment type="function">
    <text evidence="2 3 4 5">Involved in the biosynthesis of dTDP-alpha-D-desosamine, a sugar found in several bacterial macrolide antibiotics. Catalyzes the SAM-dependent deamination of dTDP-4-amino-4,6-deoxyglucose (dTDP-viosamine) to yield dTDP-3-keto-4,6-deoxyglucose. It can also catalyze the oxidative dehydrogenation of the non-physiological substrate dTDP-D-quinovose to dTDP-3-keto-6-deoxy-d-glucose. It can also deaminate dTDP-3-amino-3,6-deoxyglucose.</text>
</comment>
<comment type="catalytic activity">
    <reaction evidence="2 3 4">
        <text>dTDP-4-amino-4,6-dideoxy-alpha-D-glucose + AH2 + S-adenosyl-L-methionine = dTDP-3-dehydro-4,6-dideoxy-alpha-D-glucose + 5'-deoxyadenosine + L-methionine + A + NH4(+) + H(+)</text>
        <dbReference type="Rhea" id="RHEA:39647"/>
        <dbReference type="ChEBI" id="CHEBI:13193"/>
        <dbReference type="ChEBI" id="CHEBI:15378"/>
        <dbReference type="ChEBI" id="CHEBI:17319"/>
        <dbReference type="ChEBI" id="CHEBI:17499"/>
        <dbReference type="ChEBI" id="CHEBI:28938"/>
        <dbReference type="ChEBI" id="CHEBI:57844"/>
        <dbReference type="ChEBI" id="CHEBI:59789"/>
        <dbReference type="ChEBI" id="CHEBI:68501"/>
        <dbReference type="ChEBI" id="CHEBI:76280"/>
        <dbReference type="EC" id="4.3.1.30"/>
    </reaction>
</comment>
<comment type="cofactor">
    <cofactor evidence="2 3 4 5">
        <name>[4Fe-4S] cluster</name>
        <dbReference type="ChEBI" id="CHEBI:49883"/>
    </cofactor>
    <text evidence="2 3 4 5">Binds 1 [4Fe-4S] cluster.</text>
</comment>
<comment type="biophysicochemical properties">
    <kinetics>
        <KM evidence="3">50 uM for dTDP-viosamine (at pH 8 and 25 degrees Celsius)</KM>
        <text evidence="3">kcat is 0.017 sec(-1) for ammonia-lyase activity with dTDP-viosamine as substrate (at pH 8 and 25 degrees Celsius).</text>
    </kinetics>
</comment>
<comment type="subunit">
    <text evidence="2 3">Monomer.</text>
</comment>
<comment type="miscellaneous">
    <text evidence="4">The reaction starts by the transfer of an electron from the [4Fe-4S] cluster to S-adenosyl-L-methionine, spliting it into methionine and the radical 5-deoxyadenosin-5'-yl, which attacks the sugar substrate.</text>
</comment>
<comment type="similarity">
    <text evidence="8">Belongs to the radical SAM superfamily. DesII family.</text>
</comment>
<keyword id="KW-0002">3D-structure</keyword>
<keyword id="KW-0004">4Fe-4S</keyword>
<keyword id="KW-0045">Antibiotic biosynthesis</keyword>
<keyword id="KW-0903">Direct protein sequencing</keyword>
<keyword id="KW-0408">Iron</keyword>
<keyword id="KW-0411">Iron-sulfur</keyword>
<keyword id="KW-0456">Lyase</keyword>
<keyword id="KW-0479">Metal-binding</keyword>
<keyword id="KW-0560">Oxidoreductase</keyword>
<keyword id="KW-0949">S-adenosyl-L-methionine</keyword>
<accession>Q9ZGH1</accession>
<gene>
    <name evidence="7" type="primary">desII</name>
</gene>
<reference key="1">
    <citation type="journal article" date="1998" name="Proc. Natl. Acad. Sci. U.S.A.">
        <title>A gene cluster for macrolide antibiotic biosynthesis in Streptomyces venezuelae: architecture of metabolic diversity.</title>
        <authorList>
            <person name="Xue Y."/>
            <person name="Zhao L."/>
            <person name="Liu H.W."/>
            <person name="Sherman D.H."/>
        </authorList>
    </citation>
    <scope>NUCLEOTIDE SEQUENCE [GENOMIC DNA]</scope>
    <source>
        <strain>ATCC 15439 / DSM 41110 / IMRU3627 / M-2140</strain>
    </source>
</reference>
<reference key="2">
    <citation type="journal article" date="2009" name="J. Am. Chem. Soc.">
        <title>Characterization and mechanistic studies of DesII: a radical S-adenosyl-L-methionine enzyme involved in the biosynthesis of TDP-D-desosamine.</title>
        <authorList>
            <person name="Szu P.H."/>
            <person name="Ruszczycky M.W."/>
            <person name="Choi S.H."/>
            <person name="Yan F."/>
            <person name="Liu H.W."/>
        </authorList>
    </citation>
    <scope>PROTEIN SEQUENCE OF 2-11</scope>
    <scope>FUNCTION</scope>
    <scope>CATALYTIC ACTIVITY</scope>
    <scope>BIOPHYSICOCHEMICAL PROPERTIES</scope>
    <scope>COFACTOR</scope>
    <scope>SUBSTRATE SPECIFICITY</scope>
    <scope>SUBUNIT</scope>
</reference>
<reference key="3">
    <citation type="journal article" date="2005" name="Angew. Chem. Int. Ed. Engl.">
        <title>Biosynthesis of TDP-D-desosamine: identification of a strategy for C4 deoxygenation.</title>
        <authorList>
            <person name="Szu P.H."/>
            <person name="He X."/>
            <person name="Zhao L."/>
            <person name="Liu H.W."/>
        </authorList>
    </citation>
    <scope>FUNCTION</scope>
    <scope>CATALYTIC ACTIVITY</scope>
    <scope>COFACTOR</scope>
    <scope>SUBUNIT</scope>
</reference>
<reference key="4">
    <citation type="journal article" date="2010" name="J. Am. Chem. Soc.">
        <title>Stoichiometry of the redox neutral deamination and oxidative dehydrogenation reactions catalyzed by the radical SAM enzyme DesII.</title>
        <authorList>
            <person name="Ruszczycky M.W."/>
            <person name="Choi S.H."/>
            <person name="Liu H.W."/>
        </authorList>
    </citation>
    <scope>FUNCTION</scope>
    <scope>CATALYTIC ACTIVITY</scope>
    <scope>COFACTOR</scope>
    <scope>REACTION MECHANISM</scope>
</reference>
<reference key="5">
    <citation type="journal article" date="2011" name="J. Am. Chem. Soc.">
        <title>Mechanistic studies of the radical S-adenosyl-L-methionine enzyme DesII: EPR characterization of a radical intermediate generated during its catalyzed dehydrogenation of TDP-D-quinovose.</title>
        <authorList>
            <person name="Ruszczycky M.W."/>
            <person name="Choi S.H."/>
            <person name="Mansoorabadi S.O."/>
            <person name="Liu H.W."/>
        </authorList>
    </citation>
    <scope>FUNCTION</scope>
    <scope>COFACTOR</scope>
    <scope>REACTION MECHANISM</scope>
</reference>
<protein>
    <recommendedName>
        <fullName evidence="6">dTDP-4-amino-4,6-dideoxy-D-glucose ammonia-lyase</fullName>
        <ecNumber evidence="2 3 4">4.3.1.30</ecNumber>
    </recommendedName>
    <alternativeName>
        <fullName evidence="8">dTDP-D-quinovose dehydrogenase</fullName>
    </alternativeName>
    <alternativeName>
        <fullName evidence="8">dTDP-D-quinovose:S-adenosyl-L-methionine 1-oxidoreductase</fullName>
        <ecNumber evidence="4">1.1.99.-</ecNumber>
    </alternativeName>
</protein>
<evidence type="ECO:0000250" key="1"/>
<evidence type="ECO:0000269" key="2">
    <source>
    </source>
</evidence>
<evidence type="ECO:0000269" key="3">
    <source>
    </source>
</evidence>
<evidence type="ECO:0000269" key="4">
    <source>
    </source>
</evidence>
<evidence type="ECO:0000269" key="5">
    <source>
    </source>
</evidence>
<evidence type="ECO:0000303" key="6">
    <source>
    </source>
</evidence>
<evidence type="ECO:0000303" key="7">
    <source>
    </source>
</evidence>
<evidence type="ECO:0000305" key="8"/>
<evidence type="ECO:0007829" key="9">
    <source>
        <dbReference type="PDB" id="8HZV"/>
    </source>
</evidence>
<evidence type="ECO:0007829" key="10">
    <source>
        <dbReference type="PDB" id="8HZY"/>
    </source>
</evidence>
<proteinExistence type="evidence at protein level"/>
<sequence>MTAPALSATAPAERCAHPGADLGAAVHAVGQTLAAGGLVPPDEAGTTARHLVRLAVRYGNSPFTPLEEARHDLGVDRDAFRRLLALFGQVPELRTAVETGPAGAYWKNTLLPLEQRGVFDAALARKPVFPYSVGLYPGPTCMFRCHFCVRVTGARYDPSALDAGNAMFRSVIDEIPAGNPSAMYFSGGLEPLTNPGLGSLAAHATDHGLRPTVYTNSFALTERTLERQPGLWGLHAIRTSLYGLNDEEYEQTTGKKAAFRRVRENLRRFQQLRAERESPINLGFAYIVLPGRASRLLDLVDFIADLNDAGQGRTIDFVNIREDYSGRDDGKLPQEERAELQEALNAFEERVRERTPGLHIDYGYALNSLRTGADAELLRIKPATMRPTAHPQVAVQVDLLGDVYLYREAGFPDLDGATRYIAGRVTPDTSLTEVVRDFVERGGEVAAVDGDEYFMDGFDQVVTARLNQLERDAADGWEEARGFLR</sequence>
<dbReference type="EC" id="4.3.1.30" evidence="2 3 4"/>
<dbReference type="EC" id="1.1.99.-" evidence="4"/>
<dbReference type="EMBL" id="AF079762">
    <property type="protein sequence ID" value="AAC68683.1"/>
    <property type="molecule type" value="Genomic_DNA"/>
</dbReference>
<dbReference type="RefSeq" id="WP_055641636.1">
    <property type="nucleotide sequence ID" value="NZ_CP059991.1"/>
</dbReference>
<dbReference type="PDB" id="8HZV">
    <property type="method" value="X-ray"/>
    <property type="resolution" value="2.33 A"/>
    <property type="chains" value="A/B/C/D=1-485"/>
</dbReference>
<dbReference type="PDB" id="8HZY">
    <property type="method" value="X-ray"/>
    <property type="resolution" value="2.04 A"/>
    <property type="chains" value="A/B=1-485"/>
</dbReference>
<dbReference type="PDBsum" id="8HZV"/>
<dbReference type="PDBsum" id="8HZY"/>
<dbReference type="SMR" id="Q9ZGH1"/>
<dbReference type="GeneID" id="95691968"/>
<dbReference type="KEGG" id="ag:AAC68683"/>
<dbReference type="BioCyc" id="MetaCyc:MONOMER-16951"/>
<dbReference type="BRENDA" id="4.3.1.30">
    <property type="organism ID" value="6106"/>
</dbReference>
<dbReference type="GO" id="GO:0051539">
    <property type="term" value="F:4 iron, 4 sulfur cluster binding"/>
    <property type="evidence" value="ECO:0000314"/>
    <property type="project" value="UniProtKB"/>
</dbReference>
<dbReference type="GO" id="GO:0016841">
    <property type="term" value="F:ammonia-lyase activity"/>
    <property type="evidence" value="ECO:0000314"/>
    <property type="project" value="UniProtKB"/>
</dbReference>
<dbReference type="GO" id="GO:0046872">
    <property type="term" value="F:metal ion binding"/>
    <property type="evidence" value="ECO:0007669"/>
    <property type="project" value="UniProtKB-KW"/>
</dbReference>
<dbReference type="GO" id="GO:0016491">
    <property type="term" value="F:oxidoreductase activity"/>
    <property type="evidence" value="ECO:0007669"/>
    <property type="project" value="UniProtKB-KW"/>
</dbReference>
<dbReference type="GO" id="GO:0033068">
    <property type="term" value="P:macrolide biosynthetic process"/>
    <property type="evidence" value="ECO:0000314"/>
    <property type="project" value="UniProtKB"/>
</dbReference>
<dbReference type="CDD" id="cd01335">
    <property type="entry name" value="Radical_SAM"/>
    <property type="match status" value="1"/>
</dbReference>
<dbReference type="FunFam" id="3.20.20.70:FF:000440">
    <property type="entry name" value="dTDP-4-amino-4,6-dideoxy-D-glucose ammonia-lyase"/>
    <property type="match status" value="1"/>
</dbReference>
<dbReference type="Gene3D" id="3.20.20.70">
    <property type="entry name" value="Aldolase class I"/>
    <property type="match status" value="1"/>
</dbReference>
<dbReference type="InterPro" id="IPR013785">
    <property type="entry name" value="Aldolase_TIM"/>
</dbReference>
<dbReference type="InterPro" id="IPR016863">
    <property type="entry name" value="DesII"/>
</dbReference>
<dbReference type="InterPro" id="IPR050377">
    <property type="entry name" value="Radical_SAM_PqqE_MftC-like"/>
</dbReference>
<dbReference type="InterPro" id="IPR007197">
    <property type="entry name" value="rSAM"/>
</dbReference>
<dbReference type="NCBIfam" id="TIGR04426">
    <property type="entry name" value="rSAM_desII"/>
    <property type="match status" value="1"/>
</dbReference>
<dbReference type="PANTHER" id="PTHR11228:SF7">
    <property type="entry name" value="PQQA PEPTIDE CYCLASE"/>
    <property type="match status" value="1"/>
</dbReference>
<dbReference type="PANTHER" id="PTHR11228">
    <property type="entry name" value="RADICAL SAM DOMAIN PROTEIN"/>
    <property type="match status" value="1"/>
</dbReference>
<dbReference type="Pfam" id="PF04055">
    <property type="entry name" value="Radical_SAM"/>
    <property type="match status" value="1"/>
</dbReference>
<dbReference type="PIRSF" id="PIRSF027982">
    <property type="entry name" value="Reductase_EryCV_prd"/>
    <property type="match status" value="1"/>
</dbReference>
<dbReference type="SFLD" id="SFLDF00425">
    <property type="entry name" value="dTDP-4-amino-4_6-dideoxy-D-glu"/>
    <property type="match status" value="1"/>
</dbReference>
<dbReference type="SFLD" id="SFLDS00029">
    <property type="entry name" value="Radical_SAM"/>
    <property type="match status" value="1"/>
</dbReference>
<dbReference type="SUPFAM" id="SSF102114">
    <property type="entry name" value="Radical SAM enzymes"/>
    <property type="match status" value="1"/>
</dbReference>
<feature type="initiator methionine" description="Removed" evidence="3">
    <location>
        <position position="1"/>
    </location>
</feature>
<feature type="chain" id="PRO_0000430850" description="dTDP-4-amino-4,6-dideoxy-D-glucose ammonia-lyase">
    <location>
        <begin position="2"/>
        <end position="485"/>
    </location>
</feature>
<feature type="binding site" evidence="1">
    <location>
        <position position="141"/>
    </location>
    <ligand>
        <name>[4Fe-4S] cluster</name>
        <dbReference type="ChEBI" id="CHEBI:49883"/>
        <note>4Fe-4S-S-AdoMet</note>
    </ligand>
</feature>
<feature type="binding site" evidence="1">
    <location>
        <position position="145"/>
    </location>
    <ligand>
        <name>[4Fe-4S] cluster</name>
        <dbReference type="ChEBI" id="CHEBI:49883"/>
        <note>4Fe-4S-S-AdoMet</note>
    </ligand>
</feature>
<feature type="binding site" evidence="1">
    <location>
        <position position="148"/>
    </location>
    <ligand>
        <name>[4Fe-4S] cluster</name>
        <dbReference type="ChEBI" id="CHEBI:49883"/>
        <note>4Fe-4S-S-AdoMet</note>
    </ligand>
</feature>
<feature type="helix" evidence="10">
    <location>
        <begin position="11"/>
        <end position="14"/>
    </location>
</feature>
<feature type="helix" evidence="10">
    <location>
        <begin position="22"/>
        <end position="35"/>
    </location>
</feature>
<feature type="helix" evidence="10">
    <location>
        <begin position="41"/>
        <end position="58"/>
    </location>
</feature>
<feature type="helix" evidence="10">
    <location>
        <begin position="66"/>
        <end position="73"/>
    </location>
</feature>
<feature type="helix" evidence="10">
    <location>
        <begin position="77"/>
        <end position="87"/>
    </location>
</feature>
<feature type="helix" evidence="10">
    <location>
        <begin position="91"/>
        <end position="98"/>
    </location>
</feature>
<feature type="helix" evidence="10">
    <location>
        <begin position="103"/>
        <end position="108"/>
    </location>
</feature>
<feature type="helix" evidence="10">
    <location>
        <begin position="110"/>
        <end position="115"/>
    </location>
</feature>
<feature type="helix" evidence="10">
    <location>
        <begin position="118"/>
        <end position="123"/>
    </location>
</feature>
<feature type="strand" evidence="10">
    <location>
        <begin position="131"/>
        <end position="136"/>
    </location>
</feature>
<feature type="turn" evidence="10">
    <location>
        <begin position="149"/>
        <end position="153"/>
    </location>
</feature>
<feature type="helix" evidence="10">
    <location>
        <begin position="158"/>
        <end position="160"/>
    </location>
</feature>
<feature type="helix" evidence="10">
    <location>
        <begin position="161"/>
        <end position="172"/>
    </location>
</feature>
<feature type="strand" evidence="10">
    <location>
        <begin position="182"/>
        <end position="185"/>
    </location>
</feature>
<feature type="helix" evidence="10">
    <location>
        <begin position="191"/>
        <end position="193"/>
    </location>
</feature>
<feature type="helix" evidence="10">
    <location>
        <begin position="197"/>
        <end position="206"/>
    </location>
</feature>
<feature type="strand" evidence="10">
    <location>
        <begin position="212"/>
        <end position="215"/>
    </location>
</feature>
<feature type="helix" evidence="10">
    <location>
        <begin position="222"/>
        <end position="227"/>
    </location>
</feature>
<feature type="helix" evidence="10">
    <location>
        <begin position="229"/>
        <end position="233"/>
    </location>
</feature>
<feature type="strand" evidence="10">
    <location>
        <begin position="234"/>
        <end position="241"/>
    </location>
</feature>
<feature type="helix" evidence="10">
    <location>
        <begin position="246"/>
        <end position="253"/>
    </location>
</feature>
<feature type="helix" evidence="10">
    <location>
        <begin position="258"/>
        <end position="276"/>
    </location>
</feature>
<feature type="strand" evidence="10">
    <location>
        <begin position="281"/>
        <end position="288"/>
    </location>
</feature>
<feature type="helix" evidence="10">
    <location>
        <begin position="295"/>
        <end position="309"/>
    </location>
</feature>
<feature type="turn" evidence="10">
    <location>
        <begin position="310"/>
        <end position="312"/>
    </location>
</feature>
<feature type="strand" evidence="10">
    <location>
        <begin position="317"/>
        <end position="322"/>
    </location>
</feature>
<feature type="turn" evidence="9">
    <location>
        <begin position="328"/>
        <end position="330"/>
    </location>
</feature>
<feature type="helix" evidence="9">
    <location>
        <begin position="334"/>
        <end position="338"/>
    </location>
</feature>
<feature type="helix" evidence="10">
    <location>
        <begin position="340"/>
        <end position="354"/>
    </location>
</feature>
<feature type="strand" evidence="10">
    <location>
        <begin position="359"/>
        <end position="362"/>
    </location>
</feature>
<feature type="helix" evidence="10">
    <location>
        <begin position="364"/>
        <end position="369"/>
    </location>
</feature>
<feature type="turn" evidence="10">
    <location>
        <begin position="370"/>
        <end position="372"/>
    </location>
</feature>
<feature type="helix" evidence="10">
    <location>
        <begin position="382"/>
        <end position="384"/>
    </location>
</feature>
<feature type="turn" evidence="10">
    <location>
        <begin position="391"/>
        <end position="393"/>
    </location>
</feature>
<feature type="strand" evidence="10">
    <location>
        <begin position="394"/>
        <end position="398"/>
    </location>
</feature>
<feature type="strand" evidence="10">
    <location>
        <begin position="402"/>
        <end position="406"/>
    </location>
</feature>
<feature type="turn" evidence="10">
    <location>
        <begin position="407"/>
        <end position="409"/>
    </location>
</feature>
<feature type="helix" evidence="10">
    <location>
        <begin position="417"/>
        <end position="420"/>
    </location>
</feature>
<feature type="strand" evidence="10">
    <location>
        <begin position="421"/>
        <end position="424"/>
    </location>
</feature>
<feature type="helix" evidence="10">
    <location>
        <begin position="431"/>
        <end position="440"/>
    </location>
</feature>
<feature type="helix" evidence="10">
    <location>
        <begin position="451"/>
        <end position="454"/>
    </location>
</feature>
<feature type="helix" evidence="10">
    <location>
        <begin position="457"/>
        <end position="474"/>
    </location>
</feature>
<feature type="turn" evidence="10">
    <location>
        <begin position="479"/>
        <end position="482"/>
    </location>
</feature>
<organism>
    <name type="scientific">Streptomyces venezuelae</name>
    <dbReference type="NCBI Taxonomy" id="54571"/>
    <lineage>
        <taxon>Bacteria</taxon>
        <taxon>Bacillati</taxon>
        <taxon>Actinomycetota</taxon>
        <taxon>Actinomycetes</taxon>
        <taxon>Kitasatosporales</taxon>
        <taxon>Streptomycetaceae</taxon>
        <taxon>Streptomyces</taxon>
    </lineage>
</organism>